<accession>A1AGI0</accession>
<gene>
    <name evidence="1" type="primary">rsmB</name>
    <name evidence="1" type="synonym">sun</name>
    <name type="ordered locus">Ecok1_32760</name>
    <name type="ORF">APECO1_3158</name>
</gene>
<dbReference type="EC" id="2.1.1.176" evidence="1"/>
<dbReference type="EMBL" id="CP000468">
    <property type="protein sequence ID" value="ABJ02770.1"/>
    <property type="molecule type" value="Genomic_DNA"/>
</dbReference>
<dbReference type="RefSeq" id="WP_000744766.1">
    <property type="nucleotide sequence ID" value="NZ_CADILS010000044.1"/>
</dbReference>
<dbReference type="SMR" id="A1AGI0"/>
<dbReference type="KEGG" id="ecv:APECO1_3158"/>
<dbReference type="HOGENOM" id="CLU_005316_0_4_6"/>
<dbReference type="Proteomes" id="UP000008216">
    <property type="component" value="Chromosome"/>
</dbReference>
<dbReference type="GO" id="GO:0005829">
    <property type="term" value="C:cytosol"/>
    <property type="evidence" value="ECO:0007669"/>
    <property type="project" value="TreeGrafter"/>
</dbReference>
<dbReference type="GO" id="GO:0003723">
    <property type="term" value="F:RNA binding"/>
    <property type="evidence" value="ECO:0007669"/>
    <property type="project" value="UniProtKB-KW"/>
</dbReference>
<dbReference type="GO" id="GO:0009383">
    <property type="term" value="F:rRNA (cytosine-C5-)-methyltransferase activity"/>
    <property type="evidence" value="ECO:0007669"/>
    <property type="project" value="TreeGrafter"/>
</dbReference>
<dbReference type="GO" id="GO:0006355">
    <property type="term" value="P:regulation of DNA-templated transcription"/>
    <property type="evidence" value="ECO:0007669"/>
    <property type="project" value="InterPro"/>
</dbReference>
<dbReference type="GO" id="GO:0070475">
    <property type="term" value="P:rRNA base methylation"/>
    <property type="evidence" value="ECO:0007669"/>
    <property type="project" value="TreeGrafter"/>
</dbReference>
<dbReference type="CDD" id="cd02440">
    <property type="entry name" value="AdoMet_MTases"/>
    <property type="match status" value="1"/>
</dbReference>
<dbReference type="CDD" id="cd00620">
    <property type="entry name" value="Methyltransferase_Sun"/>
    <property type="match status" value="1"/>
</dbReference>
<dbReference type="FunFam" id="1.10.287.730:FF:000001">
    <property type="entry name" value="Ribosomal RNA small subunit methyltransferase B"/>
    <property type="match status" value="1"/>
</dbReference>
<dbReference type="FunFam" id="1.10.940.10:FF:000002">
    <property type="entry name" value="Ribosomal RNA small subunit methyltransferase B"/>
    <property type="match status" value="1"/>
</dbReference>
<dbReference type="FunFam" id="3.30.70.1170:FF:000002">
    <property type="entry name" value="Ribosomal RNA small subunit methyltransferase B"/>
    <property type="match status" value="1"/>
</dbReference>
<dbReference type="FunFam" id="3.40.50.150:FF:000022">
    <property type="entry name" value="Ribosomal RNA small subunit methyltransferase B"/>
    <property type="match status" value="1"/>
</dbReference>
<dbReference type="Gene3D" id="1.10.287.730">
    <property type="entry name" value="Helix hairpin bin"/>
    <property type="match status" value="1"/>
</dbReference>
<dbReference type="Gene3D" id="1.10.940.10">
    <property type="entry name" value="NusB-like"/>
    <property type="match status" value="1"/>
</dbReference>
<dbReference type="Gene3D" id="3.30.70.1170">
    <property type="entry name" value="Sun protein, domain 3"/>
    <property type="match status" value="1"/>
</dbReference>
<dbReference type="Gene3D" id="3.40.50.150">
    <property type="entry name" value="Vaccinia Virus protein VP39"/>
    <property type="match status" value="1"/>
</dbReference>
<dbReference type="HAMAP" id="MF_01856">
    <property type="entry name" value="16SrRNA_methyltr_B"/>
    <property type="match status" value="1"/>
</dbReference>
<dbReference type="InterPro" id="IPR049560">
    <property type="entry name" value="MeTrfase_RsmB-F_NOP2_cat"/>
</dbReference>
<dbReference type="InterPro" id="IPR001678">
    <property type="entry name" value="MeTrfase_RsmB-F_NOP2_dom"/>
</dbReference>
<dbReference type="InterPro" id="IPR035926">
    <property type="entry name" value="NusB-like_sf"/>
</dbReference>
<dbReference type="InterPro" id="IPR006027">
    <property type="entry name" value="NusB_RsmB_TIM44"/>
</dbReference>
<dbReference type="InterPro" id="IPR023267">
    <property type="entry name" value="RCMT"/>
</dbReference>
<dbReference type="InterPro" id="IPR004573">
    <property type="entry name" value="rRNA_ssu_MeTfrase_B"/>
</dbReference>
<dbReference type="InterPro" id="IPR023541">
    <property type="entry name" value="rRNA_ssu_MeTfrase_B_ent"/>
</dbReference>
<dbReference type="InterPro" id="IPR054728">
    <property type="entry name" value="RsmB-like_ferredoxin"/>
</dbReference>
<dbReference type="InterPro" id="IPR048019">
    <property type="entry name" value="RsmB-like_N"/>
</dbReference>
<dbReference type="InterPro" id="IPR018314">
    <property type="entry name" value="RsmB/NOL1/NOP2-like_CS"/>
</dbReference>
<dbReference type="InterPro" id="IPR029063">
    <property type="entry name" value="SAM-dependent_MTases_sf"/>
</dbReference>
<dbReference type="NCBIfam" id="NF008149">
    <property type="entry name" value="PRK10901.1"/>
    <property type="match status" value="1"/>
</dbReference>
<dbReference type="NCBIfam" id="NF011494">
    <property type="entry name" value="PRK14902.1"/>
    <property type="match status" value="1"/>
</dbReference>
<dbReference type="NCBIfam" id="TIGR00563">
    <property type="entry name" value="rsmB"/>
    <property type="match status" value="1"/>
</dbReference>
<dbReference type="PANTHER" id="PTHR22807:SF61">
    <property type="entry name" value="NOL1_NOP2_SUN FAMILY PROTEIN _ ANTITERMINATION NUSB DOMAIN-CONTAINING PROTEIN"/>
    <property type="match status" value="1"/>
</dbReference>
<dbReference type="PANTHER" id="PTHR22807">
    <property type="entry name" value="NOP2 YEAST -RELATED NOL1/NOP2/FMU SUN DOMAIN-CONTAINING"/>
    <property type="match status" value="1"/>
</dbReference>
<dbReference type="Pfam" id="PF01189">
    <property type="entry name" value="Methyltr_RsmB-F"/>
    <property type="match status" value="1"/>
</dbReference>
<dbReference type="Pfam" id="PF01029">
    <property type="entry name" value="NusB"/>
    <property type="match status" value="1"/>
</dbReference>
<dbReference type="Pfam" id="PF22458">
    <property type="entry name" value="RsmF-B_ferredox"/>
    <property type="match status" value="1"/>
</dbReference>
<dbReference type="PRINTS" id="PR02008">
    <property type="entry name" value="RCMTFAMILY"/>
</dbReference>
<dbReference type="SUPFAM" id="SSF48013">
    <property type="entry name" value="NusB-like"/>
    <property type="match status" value="1"/>
</dbReference>
<dbReference type="SUPFAM" id="SSF53335">
    <property type="entry name" value="S-adenosyl-L-methionine-dependent methyltransferases"/>
    <property type="match status" value="1"/>
</dbReference>
<dbReference type="PROSITE" id="PS01153">
    <property type="entry name" value="NOL1_NOP2_SUN"/>
    <property type="match status" value="1"/>
</dbReference>
<dbReference type="PROSITE" id="PS51686">
    <property type="entry name" value="SAM_MT_RSMB_NOP"/>
    <property type="match status" value="1"/>
</dbReference>
<proteinExistence type="inferred from homology"/>
<reference key="1">
    <citation type="journal article" date="2007" name="J. Bacteriol.">
        <title>The genome sequence of avian pathogenic Escherichia coli strain O1:K1:H7 shares strong similarities with human extraintestinal pathogenic E. coli genomes.</title>
        <authorList>
            <person name="Johnson T.J."/>
            <person name="Kariyawasam S."/>
            <person name="Wannemuehler Y."/>
            <person name="Mangiamele P."/>
            <person name="Johnson S.J."/>
            <person name="Doetkott C."/>
            <person name="Skyberg J.A."/>
            <person name="Lynne A.M."/>
            <person name="Johnson J.R."/>
            <person name="Nolan L.K."/>
        </authorList>
    </citation>
    <scope>NUCLEOTIDE SEQUENCE [LARGE SCALE GENOMIC DNA]</scope>
</reference>
<comment type="function">
    <text evidence="1">Specifically methylates the cytosine at position 967 (m5C967) of 16S rRNA.</text>
</comment>
<comment type="catalytic activity">
    <reaction evidence="1">
        <text>cytidine(967) in 16S rRNA + S-adenosyl-L-methionine = 5-methylcytidine(967) in 16S rRNA + S-adenosyl-L-homocysteine + H(+)</text>
        <dbReference type="Rhea" id="RHEA:42748"/>
        <dbReference type="Rhea" id="RHEA-COMP:10219"/>
        <dbReference type="Rhea" id="RHEA-COMP:10220"/>
        <dbReference type="ChEBI" id="CHEBI:15378"/>
        <dbReference type="ChEBI" id="CHEBI:57856"/>
        <dbReference type="ChEBI" id="CHEBI:59789"/>
        <dbReference type="ChEBI" id="CHEBI:74483"/>
        <dbReference type="ChEBI" id="CHEBI:82748"/>
        <dbReference type="EC" id="2.1.1.176"/>
    </reaction>
</comment>
<comment type="subcellular location">
    <subcellularLocation>
        <location evidence="1">Cytoplasm</location>
    </subcellularLocation>
</comment>
<comment type="similarity">
    <text evidence="1">Belongs to the class I-like SAM-binding methyltransferase superfamily. RsmB/NOP family.</text>
</comment>
<evidence type="ECO:0000255" key="1">
    <source>
        <dbReference type="HAMAP-Rule" id="MF_01856"/>
    </source>
</evidence>
<keyword id="KW-0963">Cytoplasm</keyword>
<keyword id="KW-0489">Methyltransferase</keyword>
<keyword id="KW-1185">Reference proteome</keyword>
<keyword id="KW-0694">RNA-binding</keyword>
<keyword id="KW-0698">rRNA processing</keyword>
<keyword id="KW-0949">S-adenosyl-L-methionine</keyword>
<keyword id="KW-0808">Transferase</keyword>
<organism>
    <name type="scientific">Escherichia coli O1:K1 / APEC</name>
    <dbReference type="NCBI Taxonomy" id="405955"/>
    <lineage>
        <taxon>Bacteria</taxon>
        <taxon>Pseudomonadati</taxon>
        <taxon>Pseudomonadota</taxon>
        <taxon>Gammaproteobacteria</taxon>
        <taxon>Enterobacterales</taxon>
        <taxon>Enterobacteriaceae</taxon>
        <taxon>Escherichia</taxon>
    </lineage>
</organism>
<feature type="chain" id="PRO_0000366157" description="Ribosomal RNA small subunit methyltransferase B">
    <location>
        <begin position="1"/>
        <end position="429"/>
    </location>
</feature>
<feature type="active site" description="Nucleophile" evidence="1">
    <location>
        <position position="375"/>
    </location>
</feature>
<feature type="binding site" evidence="1">
    <location>
        <begin position="254"/>
        <end position="260"/>
    </location>
    <ligand>
        <name>S-adenosyl-L-methionine</name>
        <dbReference type="ChEBI" id="CHEBI:59789"/>
    </ligand>
</feature>
<feature type="binding site" evidence="1">
    <location>
        <position position="277"/>
    </location>
    <ligand>
        <name>S-adenosyl-L-methionine</name>
        <dbReference type="ChEBI" id="CHEBI:59789"/>
    </ligand>
</feature>
<feature type="binding site" evidence="1">
    <location>
        <position position="303"/>
    </location>
    <ligand>
        <name>S-adenosyl-L-methionine</name>
        <dbReference type="ChEBI" id="CHEBI:59789"/>
    </ligand>
</feature>
<feature type="binding site" evidence="1">
    <location>
        <position position="322"/>
    </location>
    <ligand>
        <name>S-adenosyl-L-methionine</name>
        <dbReference type="ChEBI" id="CHEBI:59789"/>
    </ligand>
</feature>
<sequence>MKKQRNLRSMAAQAIEQVVEQGQSLSNILPPLQQKVSDKDKALLQELCFGVLRTLSQLDWLINKLMARPMTGKQRTVHYLIMVGLYQLLYTRIPPHAALAETVEGAVAIKRPQLKGLINGVLRQFQRQQDELLAEFNASDARYLHPSWLLKRLQKAYPEQWQSIVEANNQRPPMWLRVNRTHHSRDSWLALLDEAGMKGFPHADYPDAVQLETPAPVHALPGFEEGWVTVQDASAQGCMTWLAPQNGEHILDLCAAPGGKTTHILEVAPEAQVLAVDIDEQRLSRVYDNLKRLGMKATVKQGDGRYPSQWCGEQQFDRILLDAPCSATGVIRRHPDIKWLRRDRDIPELAQLQSEILDAIWSHLKSGGTLVYATCSMLPEENSLQIKAFLQRTADAELCETGTPEQPGKQNLPGAEEGDGFFYAKLIKK</sequence>
<name>RSMB_ECOK1</name>
<protein>
    <recommendedName>
        <fullName evidence="1">Ribosomal RNA small subunit methyltransferase B</fullName>
        <ecNumber evidence="1">2.1.1.176</ecNumber>
    </recommendedName>
    <alternativeName>
        <fullName evidence="1">16S rRNA m5C967 methyltransferase</fullName>
    </alternativeName>
    <alternativeName>
        <fullName evidence="1">rRNA (cytosine-C(5)-)-methyltransferase RsmB</fullName>
    </alternativeName>
</protein>